<proteinExistence type="evidence at protein level"/>
<name>FC10_PHOAM</name>
<dbReference type="EC" id="1.-.-.-" evidence="7"/>
<dbReference type="EMBL" id="AB686276">
    <property type="protein sequence ID" value="BAM71035.1"/>
    <property type="molecule type" value="mRNA"/>
</dbReference>
<dbReference type="SMR" id="L0N065"/>
<dbReference type="GlyCosmos" id="L0N065">
    <property type="glycosylation" value="2 sites, No reported glycans"/>
</dbReference>
<dbReference type="GO" id="GO:0016020">
    <property type="term" value="C:membrane"/>
    <property type="evidence" value="ECO:0007669"/>
    <property type="project" value="UniProtKB-SubCell"/>
</dbReference>
<dbReference type="GO" id="GO:0020037">
    <property type="term" value="F:heme binding"/>
    <property type="evidence" value="ECO:0007669"/>
    <property type="project" value="InterPro"/>
</dbReference>
<dbReference type="GO" id="GO:0005506">
    <property type="term" value="F:iron ion binding"/>
    <property type="evidence" value="ECO:0007669"/>
    <property type="project" value="InterPro"/>
</dbReference>
<dbReference type="GO" id="GO:0004497">
    <property type="term" value="F:monooxygenase activity"/>
    <property type="evidence" value="ECO:0007669"/>
    <property type="project" value="UniProtKB-KW"/>
</dbReference>
<dbReference type="GO" id="GO:0016705">
    <property type="term" value="F:oxidoreductase activity, acting on paired donors, with incorporation or reduction of molecular oxygen"/>
    <property type="evidence" value="ECO:0007669"/>
    <property type="project" value="InterPro"/>
</dbReference>
<dbReference type="GO" id="GO:0019748">
    <property type="term" value="P:secondary metabolic process"/>
    <property type="evidence" value="ECO:0007669"/>
    <property type="project" value="UniProtKB-ARBA"/>
</dbReference>
<dbReference type="CDD" id="cd11041">
    <property type="entry name" value="CYP503A1-like"/>
    <property type="match status" value="1"/>
</dbReference>
<dbReference type="Gene3D" id="1.10.630.10">
    <property type="entry name" value="Cytochrome P450"/>
    <property type="match status" value="1"/>
</dbReference>
<dbReference type="InterPro" id="IPR001128">
    <property type="entry name" value="Cyt_P450"/>
</dbReference>
<dbReference type="InterPro" id="IPR017972">
    <property type="entry name" value="Cyt_P450_CS"/>
</dbReference>
<dbReference type="InterPro" id="IPR002403">
    <property type="entry name" value="Cyt_P450_E_grp-IV"/>
</dbReference>
<dbReference type="InterPro" id="IPR036396">
    <property type="entry name" value="Cyt_P450_sf"/>
</dbReference>
<dbReference type="PANTHER" id="PTHR46206">
    <property type="entry name" value="CYTOCHROME P450"/>
    <property type="match status" value="1"/>
</dbReference>
<dbReference type="PANTHER" id="PTHR46206:SF2">
    <property type="entry name" value="CYTOCHROME P450 MONOOXYGENASE AUSG-RELATED"/>
    <property type="match status" value="1"/>
</dbReference>
<dbReference type="Pfam" id="PF00067">
    <property type="entry name" value="p450"/>
    <property type="match status" value="1"/>
</dbReference>
<dbReference type="PRINTS" id="PR00465">
    <property type="entry name" value="EP450IV"/>
</dbReference>
<dbReference type="SUPFAM" id="SSF48264">
    <property type="entry name" value="Cytochrome P450"/>
    <property type="match status" value="1"/>
</dbReference>
<dbReference type="PROSITE" id="PS00086">
    <property type="entry name" value="CYTOCHROME_P450"/>
    <property type="match status" value="1"/>
</dbReference>
<protein>
    <recommendedName>
        <fullName evidence="8">Fusicoccin H C-9 hydroxylase</fullName>
        <ecNumber evidence="7">1.-.-.-</ecNumber>
    </recommendedName>
    <alternativeName>
        <fullName evidence="8">Cytochrome P450 monooxygenase PaP450-4</fullName>
    </alternativeName>
    <alternativeName>
        <fullName evidence="8">Fusicoccin A biosynthetic gene clusters protein 10</fullName>
    </alternativeName>
</protein>
<evidence type="ECO:0000250" key="1">
    <source>
        <dbReference type="UniProtKB" id="P04798"/>
    </source>
</evidence>
<evidence type="ECO:0000255" key="2"/>
<evidence type="ECO:0000255" key="3">
    <source>
        <dbReference type="PROSITE-ProRule" id="PRU00498"/>
    </source>
</evidence>
<evidence type="ECO:0000269" key="4">
    <source>
    </source>
</evidence>
<evidence type="ECO:0000269" key="5">
    <source>
    </source>
</evidence>
<evidence type="ECO:0000269" key="6">
    <source>
    </source>
</evidence>
<evidence type="ECO:0000269" key="7">
    <source>
    </source>
</evidence>
<evidence type="ECO:0000303" key="8">
    <source>
    </source>
</evidence>
<evidence type="ECO:0000305" key="9"/>
<sequence length="518" mass="59208">MAKFTVTSLERHLLLISTVIAVLAALIVSRGCNYLLKRWKLSAYPLYEDKKVTPIEELHSSRDLIAKGFAKSQGKEIWRINTTIGEVLVVSPKYIEKFRYGHGCSAAAYTERELPISAPGYEPFTFASNEWRQRNADIILHRLTGLVSNRKIELSEELSNALESRWTNSTDWHAVSLFQTMTAIVAQTTQYFFTNRELCRNDAYIQSLFAYSSLAFTEGRSLMKWPRVLHPLVARFHPASQNLQSALENVNKHIFPFVRERRAEISRRRFEAAQSGKETPLADEWVAWLDEKAGNEDYNPGVAMVSFSVASFHTTTDFMCQLLCDLARNPAIIEQLKEEASDVLRDHTWTKSSFARLDLMDRCMKESQRLKPIGAVFLKSRAQKDISVENGNIIPAGSLFVVSGHWMHDPAIYPEPEKFDPGRHLRHAEESKPNKPKQFTAVSPEHMGWGYGKHSCPGRFFAATVAKMLLTHILFKYEFKLPDGKLNQHAYEFTTEILVRRRIEEGALNLDSFDSIDR</sequence>
<reference key="1">
    <citation type="journal article" date="2012" name="PLoS ONE">
        <title>Molecular breeding of a fungus producing a precursor diterpene suitable for semi-synthesis by dissection of the biosynthetic machinery.</title>
        <authorList>
            <person name="Noike M."/>
            <person name="Ono Y."/>
            <person name="Araki Y."/>
            <person name="Tanio R."/>
            <person name="Higuchi Y."/>
            <person name="Nitta H."/>
            <person name="Hamano Y."/>
            <person name="Toyomasu T."/>
            <person name="Sassa T."/>
            <person name="Kato N."/>
            <person name="Dairi T."/>
        </authorList>
    </citation>
    <scope>NUCLEOTIDE SEQUENCE [MRNA]</scope>
    <scope>FUNCTION</scope>
    <scope>CATALYTIC ACTIVITY</scope>
    <scope>DISRUPTION PHENOTYPE</scope>
    <scope>PATHWAY</scope>
</reference>
<reference key="2">
    <citation type="journal article" date="2007" name="Proc. Natl. Acad. Sci. U.S.A.">
        <title>Fusicoccins are biosynthesized by an unusual chimera diterpene synthase in fungi.</title>
        <authorList>
            <person name="Toyomasu T."/>
            <person name="Tsukahara M."/>
            <person name="Kaneko A."/>
            <person name="Niida R."/>
            <person name="Mitsuhashi W."/>
            <person name="Dairi T."/>
            <person name="Kato N."/>
            <person name="Sassa T."/>
        </authorList>
    </citation>
    <scope>FUNCTION</scope>
</reference>
<reference key="3">
    <citation type="journal article" date="2011" name="J. Am. Chem. Soc.">
        <title>Dioxygenases, key enzymes to determine the aglycon structures of fusicoccin and brassicicene, diterpene compounds produced by fungi.</title>
        <authorList>
            <person name="Ono Y."/>
            <person name="Minami A."/>
            <person name="Noike M."/>
            <person name="Higuchi Y."/>
            <person name="Toyomasu T."/>
            <person name="Sassa T."/>
            <person name="Kato N."/>
            <person name="Dairi T."/>
        </authorList>
    </citation>
    <scope>FUNCTION</scope>
</reference>
<reference key="4">
    <citation type="journal article" date="2012" name="ChemBioChem">
        <title>An enzyme catalyzing O-prenylation of the glucose moiety of fusicoccin A, a diterpene glucoside produced by the fungus Phomopsis amygdali.</title>
        <authorList>
            <person name="Noike M."/>
            <person name="Liu C."/>
            <person name="Ono Y."/>
            <person name="Hamano Y."/>
            <person name="Toyomasu T."/>
            <person name="Sassa T."/>
            <person name="Kato N."/>
            <person name="Dairi T."/>
        </authorList>
    </citation>
    <scope>FUNCTION</scope>
</reference>
<comment type="function">
    <text evidence="4 5 6 7">Cytochrome P450 monooxygenase; part of the 2 gene clusters that mediate the biosynthesis of fusicoccins, diterpene glucosides that display phytohormone-like activity and function as potent activators of plasma membrane H(+)-ATPases in plants by modifying 14-3-3 proteins and cause the plant disease constriction canker (PubMed:22870285). The first step in the pathway is performed by the fusicoccadiene synthase PaFS that possesses both prenyl transferase and terpene cyclase activity, converting isopentenyl diphosphate and dimethylallyl diphosphate into geranylgeranyl diphosphate (GGDP) and successively converting GGDP into fusicocca-2,10(14)-diene, a precursor for fusicoccin H (PubMed:17360612). The second step is the oxidation at the C-8 position by the cytochrome P450 monooxygenase PaP450-2 to yield fusicocca-2,10(14)-diene-8-beta-ol (PubMed:22870285). The cytochrome P450 monooxygenase PaP450-1 then catalyzes the hydroxylation at the C-16 position to produce fusicocca-2,10(14)-diene-8-beta,16-diol (PubMed:22870285). The dioxygenase fc-dox then catalyzes the 16-oxydation of fusicocca-2,10(14)-diene-8-beta,16-diol to yield an aldehyde (8-beta-hydroxyfusicocca-1,10(14)-dien-16-al) (PubMed:21299202, PubMed:22870285). The short-chain dehydrogenase/reductase fc-sdr catalyzes the reduction of the aldehyde to yield fusicocca-1,10(14)-diene-8-beta,16-diol (PubMed:21299202, PubMed:22870285). The next step is the hydroxylation at C-9 performed by the cytochrome P450 monooxygenase PaP450-3 that leads to fusicoccin H aglycon which is glycosylated to fusicoccin H by the O-glycosyltransferase PaGT (PubMed:22870285). Hydroxylation at C-12 by the cytochrome P450 monooxygenase PaP450-4 leads then to the production of fusicoccin Q and is followed by methylation by the O-methyltransferase PaMT to yield fusicoccin P (PubMed:22870285). Fusicoccin P is further converted to fusicoccin J via prenylation by the O-glucose prenyltransferase PaPT (PubMed:22287087). Cytochrome P450 monooxygenase PaP450-5 then performs hydroxylation at C-19 to yield dideacetyl-fusicoccin A which is acetylated to 3'-O-deacetyl-fusicoccin A by the O-acetyltransferase PaAT-2 (PubMed:22870285). Finally, a another acetylation by the O-acetyltransferase PaAT-1 yields fusicoccin A (PubMed:22870285).</text>
</comment>
<comment type="cofactor">
    <cofactor evidence="1">
        <name>heme</name>
        <dbReference type="ChEBI" id="CHEBI:30413"/>
    </cofactor>
</comment>
<comment type="pathway">
    <text evidence="7">Mycotoxin biosynthesis.</text>
</comment>
<comment type="subcellular location">
    <subcellularLocation>
        <location evidence="2">Membrane</location>
        <topology evidence="2">Single-pass membrane protein</topology>
    </subcellularLocation>
</comment>
<comment type="disruption phenotype">
    <text evidence="7">Accumulates fusicoccin H.</text>
</comment>
<comment type="similarity">
    <text evidence="9">Belongs to the cytochrome P450 family.</text>
</comment>
<feature type="chain" id="PRO_0000445449" description="Fusicoccin H C-9 hydroxylase">
    <location>
        <begin position="1"/>
        <end position="518"/>
    </location>
</feature>
<feature type="transmembrane region" description="Helical" evidence="2">
    <location>
        <begin position="12"/>
        <end position="29"/>
    </location>
</feature>
<feature type="binding site" description="axial binding residue" evidence="1">
    <location>
        <position position="456"/>
    </location>
    <ligand>
        <name>heme</name>
        <dbReference type="ChEBI" id="CHEBI:30413"/>
    </ligand>
    <ligandPart>
        <name>Fe</name>
        <dbReference type="ChEBI" id="CHEBI:18248"/>
    </ligandPart>
</feature>
<feature type="glycosylation site" description="N-linked (GlcNAc...) asparagine" evidence="3">
    <location>
        <position position="81"/>
    </location>
</feature>
<feature type="glycosylation site" description="N-linked (GlcNAc...) asparagine" evidence="3">
    <location>
        <position position="168"/>
    </location>
</feature>
<organism>
    <name type="scientific">Phomopsis amygdali</name>
    <name type="common">Fusicoccum amygdali</name>
    <dbReference type="NCBI Taxonomy" id="1214568"/>
    <lineage>
        <taxon>Eukaryota</taxon>
        <taxon>Fungi</taxon>
        <taxon>Dikarya</taxon>
        <taxon>Ascomycota</taxon>
        <taxon>Pezizomycotina</taxon>
        <taxon>Sordariomycetes</taxon>
        <taxon>Sordariomycetidae</taxon>
        <taxon>Diaporthales</taxon>
        <taxon>Diaporthaceae</taxon>
        <taxon>Diaporthe</taxon>
    </lineage>
</organism>
<keyword id="KW-0325">Glycoprotein</keyword>
<keyword id="KW-0349">Heme</keyword>
<keyword id="KW-0408">Iron</keyword>
<keyword id="KW-0472">Membrane</keyword>
<keyword id="KW-0479">Metal-binding</keyword>
<keyword id="KW-0503">Monooxygenase</keyword>
<keyword id="KW-0560">Oxidoreductase</keyword>
<keyword id="KW-0812">Transmembrane</keyword>
<keyword id="KW-1133">Transmembrane helix</keyword>
<accession>L0N065</accession>
<gene>
    <name evidence="8" type="primary">PaP450-4</name>
    <name evidence="8" type="synonym">orf10</name>
</gene>